<feature type="chain" id="PRO_1000081979" description="Uridine kinase">
    <location>
        <begin position="1"/>
        <end position="207"/>
    </location>
</feature>
<feature type="binding site" evidence="1">
    <location>
        <begin position="13"/>
        <end position="20"/>
    </location>
    <ligand>
        <name>ATP</name>
        <dbReference type="ChEBI" id="CHEBI:30616"/>
    </ligand>
</feature>
<organism>
    <name type="scientific">Ureaplasma parvum serovar 3 (strain ATCC 27815 / 27 / NCTC 11736)</name>
    <dbReference type="NCBI Taxonomy" id="505682"/>
    <lineage>
        <taxon>Bacteria</taxon>
        <taxon>Bacillati</taxon>
        <taxon>Mycoplasmatota</taxon>
        <taxon>Mycoplasmoidales</taxon>
        <taxon>Mycoplasmoidaceae</taxon>
        <taxon>Ureaplasma</taxon>
    </lineage>
</organism>
<reference key="1">
    <citation type="submission" date="2008-02" db="EMBL/GenBank/DDBJ databases">
        <title>Genome sequence of Ureaplasma parvum serovar 3.</title>
        <authorList>
            <person name="Methe B.A."/>
            <person name="Glass J."/>
            <person name="Waites K."/>
            <person name="Shrivastava S."/>
        </authorList>
    </citation>
    <scope>NUCLEOTIDE SEQUENCE [LARGE SCALE GENOMIC DNA]</scope>
    <source>
        <strain>ATCC 27815 / 27 / NCTC 11736</strain>
    </source>
</reference>
<proteinExistence type="inferred from homology"/>
<gene>
    <name evidence="1" type="primary">udk</name>
    <name type="ordered locus">UPA3_0348</name>
</gene>
<keyword id="KW-0067">ATP-binding</keyword>
<keyword id="KW-0963">Cytoplasm</keyword>
<keyword id="KW-0418">Kinase</keyword>
<keyword id="KW-0547">Nucleotide-binding</keyword>
<keyword id="KW-0808">Transferase</keyword>
<dbReference type="EC" id="2.7.1.48" evidence="1"/>
<dbReference type="EMBL" id="CP000942">
    <property type="protein sequence ID" value="ACA32780.1"/>
    <property type="molecule type" value="Genomic_DNA"/>
</dbReference>
<dbReference type="RefSeq" id="WP_006688441.1">
    <property type="nucleotide sequence ID" value="NC_010503.1"/>
</dbReference>
<dbReference type="SMR" id="B1AIX1"/>
<dbReference type="GeneID" id="29672380"/>
<dbReference type="KEGG" id="upa:UPA3_0348"/>
<dbReference type="HOGENOM" id="CLU_021278_1_2_14"/>
<dbReference type="UniPathway" id="UPA00574">
    <property type="reaction ID" value="UER00637"/>
</dbReference>
<dbReference type="UniPathway" id="UPA00579">
    <property type="reaction ID" value="UER00640"/>
</dbReference>
<dbReference type="Proteomes" id="UP000002162">
    <property type="component" value="Chromosome"/>
</dbReference>
<dbReference type="GO" id="GO:0005737">
    <property type="term" value="C:cytoplasm"/>
    <property type="evidence" value="ECO:0007669"/>
    <property type="project" value="UniProtKB-SubCell"/>
</dbReference>
<dbReference type="GO" id="GO:0005524">
    <property type="term" value="F:ATP binding"/>
    <property type="evidence" value="ECO:0007669"/>
    <property type="project" value="UniProtKB-UniRule"/>
</dbReference>
<dbReference type="GO" id="GO:0043771">
    <property type="term" value="F:cytidine kinase activity"/>
    <property type="evidence" value="ECO:0007669"/>
    <property type="project" value="RHEA"/>
</dbReference>
<dbReference type="GO" id="GO:0004849">
    <property type="term" value="F:uridine kinase activity"/>
    <property type="evidence" value="ECO:0007669"/>
    <property type="project" value="UniProtKB-UniRule"/>
</dbReference>
<dbReference type="GO" id="GO:0044211">
    <property type="term" value="P:CTP salvage"/>
    <property type="evidence" value="ECO:0007669"/>
    <property type="project" value="UniProtKB-UniRule"/>
</dbReference>
<dbReference type="GO" id="GO:0044206">
    <property type="term" value="P:UMP salvage"/>
    <property type="evidence" value="ECO:0007669"/>
    <property type="project" value="UniProtKB-UniRule"/>
</dbReference>
<dbReference type="CDD" id="cd02023">
    <property type="entry name" value="UMPK"/>
    <property type="match status" value="1"/>
</dbReference>
<dbReference type="Gene3D" id="3.40.50.300">
    <property type="entry name" value="P-loop containing nucleotide triphosphate hydrolases"/>
    <property type="match status" value="1"/>
</dbReference>
<dbReference type="HAMAP" id="MF_00551">
    <property type="entry name" value="Uridine_kinase"/>
    <property type="match status" value="1"/>
</dbReference>
<dbReference type="InterPro" id="IPR027417">
    <property type="entry name" value="P-loop_NTPase"/>
</dbReference>
<dbReference type="InterPro" id="IPR006083">
    <property type="entry name" value="PRK/URK"/>
</dbReference>
<dbReference type="InterPro" id="IPR026008">
    <property type="entry name" value="Uridine_kinase"/>
</dbReference>
<dbReference type="InterPro" id="IPR000764">
    <property type="entry name" value="Uridine_kinase-like"/>
</dbReference>
<dbReference type="NCBIfam" id="NF004018">
    <property type="entry name" value="PRK05480.1"/>
    <property type="match status" value="1"/>
</dbReference>
<dbReference type="NCBIfam" id="TIGR00235">
    <property type="entry name" value="udk"/>
    <property type="match status" value="1"/>
</dbReference>
<dbReference type="PANTHER" id="PTHR10285">
    <property type="entry name" value="URIDINE KINASE"/>
    <property type="match status" value="1"/>
</dbReference>
<dbReference type="Pfam" id="PF00485">
    <property type="entry name" value="PRK"/>
    <property type="match status" value="1"/>
</dbReference>
<dbReference type="PRINTS" id="PR00988">
    <property type="entry name" value="URIDINKINASE"/>
</dbReference>
<dbReference type="SUPFAM" id="SSF52540">
    <property type="entry name" value="P-loop containing nucleoside triphosphate hydrolases"/>
    <property type="match status" value="1"/>
</dbReference>
<evidence type="ECO:0000255" key="1">
    <source>
        <dbReference type="HAMAP-Rule" id="MF_00551"/>
    </source>
</evidence>
<name>URK_UREP2</name>
<comment type="catalytic activity">
    <reaction evidence="1">
        <text>uridine + ATP = UMP + ADP + H(+)</text>
        <dbReference type="Rhea" id="RHEA:16825"/>
        <dbReference type="ChEBI" id="CHEBI:15378"/>
        <dbReference type="ChEBI" id="CHEBI:16704"/>
        <dbReference type="ChEBI" id="CHEBI:30616"/>
        <dbReference type="ChEBI" id="CHEBI:57865"/>
        <dbReference type="ChEBI" id="CHEBI:456216"/>
        <dbReference type="EC" id="2.7.1.48"/>
    </reaction>
</comment>
<comment type="catalytic activity">
    <reaction evidence="1">
        <text>cytidine + ATP = CMP + ADP + H(+)</text>
        <dbReference type="Rhea" id="RHEA:24674"/>
        <dbReference type="ChEBI" id="CHEBI:15378"/>
        <dbReference type="ChEBI" id="CHEBI:17562"/>
        <dbReference type="ChEBI" id="CHEBI:30616"/>
        <dbReference type="ChEBI" id="CHEBI:60377"/>
        <dbReference type="ChEBI" id="CHEBI:456216"/>
        <dbReference type="EC" id="2.7.1.48"/>
    </reaction>
</comment>
<comment type="pathway">
    <text evidence="1">Pyrimidine metabolism; CTP biosynthesis via salvage pathway; CTP from cytidine: step 1/3.</text>
</comment>
<comment type="pathway">
    <text evidence="1">Pyrimidine metabolism; UMP biosynthesis via salvage pathway; UMP from uridine: step 1/1.</text>
</comment>
<comment type="subcellular location">
    <subcellularLocation>
        <location evidence="1">Cytoplasm</location>
    </subcellularLocation>
</comment>
<comment type="similarity">
    <text evidence="1">Belongs to the uridine kinase family.</text>
</comment>
<sequence>MNTKSPILILIAGASGSGKTTFANEIIARIPKNTTSVVICQDSYYISNSQLNKKERRLINYDHPSSFEWELMREQLSDIKKRKKIKVPIYDYKTEIRLDKTIDISDVDVIVLEGIYAIYDDVINQIADLKIFIETPKDECLIRRILRDVNERNRSFESVITQWRSTVSPMYDQFVEPSKKNANVSVLWNEHNRVALHLIHKWINNIH</sequence>
<accession>B1AIX1</accession>
<protein>
    <recommendedName>
        <fullName evidence="1">Uridine kinase</fullName>
        <ecNumber evidence="1">2.7.1.48</ecNumber>
    </recommendedName>
    <alternativeName>
        <fullName evidence="1">Cytidine monophosphokinase</fullName>
    </alternativeName>
    <alternativeName>
        <fullName evidence="1">Uridine monophosphokinase</fullName>
    </alternativeName>
</protein>